<keyword id="KW-1185">Reference proteome</keyword>
<proteinExistence type="inferred from homology"/>
<name>Y882_CHRSD</name>
<sequence>MTYFIDRRANAKNKSAVNRQRFLQRYRSHIKRAVEEAVNRRSITDMERGEKISIPAKDISEPVFQHGPGGARTIVSPGNKEFVEGDRLRRPGGEGRGGSGEGSASNQGEGMDEFAFSLSREEFLDFVFDGLALPHLERKQLRDLDEVRPVRAGVTRDGVPSRINIVRSMREAQARRIGMRAPIKRALREAEEALESEERKDPVLRNPARIGELKAEIERLEKRLEAVPFIDTYDLRYNNLIDQPQPSNKAVMFCVMDVSGSMTQGHKDIAKRFFLLLYLFLERNYEKVELVFIRHHTAAKEVDEEEFFYSRETGGTIVSSALTLVDEIIAKRYSPAQWNLYVAQASDGDNWDDDSLTCRDLLMTSLMAKLQYYTYVEITPHSHQALWEEYERVQAAHPSRFAMQQIVEPGDIYPVFRKLFRKRVAS</sequence>
<gene>
    <name type="ordered locus">Csal_0882</name>
</gene>
<protein>
    <recommendedName>
        <fullName evidence="1">UPF0229 protein Csal_0882</fullName>
    </recommendedName>
</protein>
<reference key="1">
    <citation type="journal article" date="2011" name="Stand. Genomic Sci.">
        <title>Complete genome sequence of the halophilic and highly halotolerant Chromohalobacter salexigens type strain (1H11(T)).</title>
        <authorList>
            <person name="Copeland A."/>
            <person name="O'Connor K."/>
            <person name="Lucas S."/>
            <person name="Lapidus A."/>
            <person name="Berry K.W."/>
            <person name="Detter J.C."/>
            <person name="Del Rio T.G."/>
            <person name="Hammon N."/>
            <person name="Dalin E."/>
            <person name="Tice H."/>
            <person name="Pitluck S."/>
            <person name="Bruce D."/>
            <person name="Goodwin L."/>
            <person name="Han C."/>
            <person name="Tapia R."/>
            <person name="Saunders E."/>
            <person name="Schmutz J."/>
            <person name="Brettin T."/>
            <person name="Larimer F."/>
            <person name="Land M."/>
            <person name="Hauser L."/>
            <person name="Vargas C."/>
            <person name="Nieto J.J."/>
            <person name="Kyrpides N.C."/>
            <person name="Ivanova N."/>
            <person name="Goker M."/>
            <person name="Klenk H.P."/>
            <person name="Csonka L.N."/>
            <person name="Woyke T."/>
        </authorList>
    </citation>
    <scope>NUCLEOTIDE SEQUENCE [LARGE SCALE GENOMIC DNA]</scope>
    <source>
        <strain>ATCC BAA-138 / DSM 3043 / CIP 106854 / NCIMB 13768 / 1H11</strain>
    </source>
</reference>
<accession>Q1QZ69</accession>
<organism>
    <name type="scientific">Chromohalobacter salexigens (strain ATCC BAA-138 / DSM 3043 / CIP 106854 / NCIMB 13768 / 1H11)</name>
    <dbReference type="NCBI Taxonomy" id="290398"/>
    <lineage>
        <taxon>Bacteria</taxon>
        <taxon>Pseudomonadati</taxon>
        <taxon>Pseudomonadota</taxon>
        <taxon>Gammaproteobacteria</taxon>
        <taxon>Oceanospirillales</taxon>
        <taxon>Halomonadaceae</taxon>
        <taxon>Chromohalobacter</taxon>
    </lineage>
</organism>
<feature type="chain" id="PRO_1000066851" description="UPF0229 protein Csal_0882">
    <location>
        <begin position="1"/>
        <end position="426"/>
    </location>
</feature>
<feature type="region of interest" description="Disordered" evidence="2">
    <location>
        <begin position="82"/>
        <end position="109"/>
    </location>
</feature>
<feature type="compositionally biased region" description="Basic and acidic residues" evidence="2">
    <location>
        <begin position="82"/>
        <end position="93"/>
    </location>
</feature>
<evidence type="ECO:0000255" key="1">
    <source>
        <dbReference type="HAMAP-Rule" id="MF_01232"/>
    </source>
</evidence>
<evidence type="ECO:0000256" key="2">
    <source>
        <dbReference type="SAM" id="MobiDB-lite"/>
    </source>
</evidence>
<comment type="similarity">
    <text evidence="1">Belongs to the UPF0229 family.</text>
</comment>
<dbReference type="EMBL" id="CP000285">
    <property type="protein sequence ID" value="ABE58239.1"/>
    <property type="molecule type" value="Genomic_DNA"/>
</dbReference>
<dbReference type="RefSeq" id="WP_011506185.1">
    <property type="nucleotide sequence ID" value="NC_007963.1"/>
</dbReference>
<dbReference type="SMR" id="Q1QZ69"/>
<dbReference type="STRING" id="290398.Csal_0882"/>
<dbReference type="GeneID" id="95333636"/>
<dbReference type="KEGG" id="csa:Csal_0882"/>
<dbReference type="eggNOG" id="COG2718">
    <property type="taxonomic scope" value="Bacteria"/>
</dbReference>
<dbReference type="HOGENOM" id="CLU_049702_0_0_6"/>
<dbReference type="OrthoDB" id="9788289at2"/>
<dbReference type="Proteomes" id="UP000000239">
    <property type="component" value="Chromosome"/>
</dbReference>
<dbReference type="HAMAP" id="MF_01232">
    <property type="entry name" value="UPF0229"/>
    <property type="match status" value="1"/>
</dbReference>
<dbReference type="InterPro" id="IPR006698">
    <property type="entry name" value="UPF0229"/>
</dbReference>
<dbReference type="NCBIfam" id="NF003707">
    <property type="entry name" value="PRK05325.1-2"/>
    <property type="match status" value="1"/>
</dbReference>
<dbReference type="NCBIfam" id="NF003708">
    <property type="entry name" value="PRK05325.1-3"/>
    <property type="match status" value="1"/>
</dbReference>
<dbReference type="PANTHER" id="PTHR30510">
    <property type="entry name" value="UPF0229 PROTEIN YEAH"/>
    <property type="match status" value="1"/>
</dbReference>
<dbReference type="PANTHER" id="PTHR30510:SF2">
    <property type="entry name" value="UPF0229 PROTEIN YEAH"/>
    <property type="match status" value="1"/>
</dbReference>
<dbReference type="Pfam" id="PF04285">
    <property type="entry name" value="DUF444"/>
    <property type="match status" value="1"/>
</dbReference>